<name>MODC_YERPS</name>
<sequence length="359" mass="39635">MLELNFSQQLGDLHLQVATDLPAQGITAIFGLSGAGKTSLINVIGGLTRPQQGRVILNGRVLVDAEKNIYLPPEKRRVGYVFQDARLFPHYRVRGNLQYGMAASMRGQFDAIVGLLGIEPLLNRFPFTLSGGEKQRVAIGRALLTAPELLLMDEPLASLDLPRKRELLPYLERLAQDVNTPILYVSHSMDEILRLADQVVVMDAGKVRAVGGLEEVWASSALRPWLQREEPSSILRVSVIGHHDRYAMTALALGDQRLWVGKLDAAEGNSMRIRINAADVSLALQPPHSSSIRNILPVKVAECLDVGGQVDVKLAIGEQWLWARITPWARDELGLKPGQWVYAQIKSVSFNRQNGPVPD</sequence>
<comment type="function">
    <text evidence="1">Part of the ABC transporter complex ModABC involved in molybdenum import. Responsible for energy coupling to the transport system.</text>
</comment>
<comment type="catalytic activity">
    <reaction evidence="1">
        <text>molybdate(out) + ATP + H2O = molybdate(in) + ADP + phosphate + H(+)</text>
        <dbReference type="Rhea" id="RHEA:22020"/>
        <dbReference type="ChEBI" id="CHEBI:15377"/>
        <dbReference type="ChEBI" id="CHEBI:15378"/>
        <dbReference type="ChEBI" id="CHEBI:30616"/>
        <dbReference type="ChEBI" id="CHEBI:36264"/>
        <dbReference type="ChEBI" id="CHEBI:43474"/>
        <dbReference type="ChEBI" id="CHEBI:456216"/>
        <dbReference type="EC" id="7.3.2.5"/>
    </reaction>
</comment>
<comment type="subunit">
    <text evidence="1">The complex is composed of two ATP-binding proteins (ModC), two transmembrane proteins (ModB) and a solute-binding protein (ModA).</text>
</comment>
<comment type="subcellular location">
    <subcellularLocation>
        <location evidence="1">Cell inner membrane</location>
        <topology evidence="1">Peripheral membrane protein</topology>
    </subcellularLocation>
</comment>
<comment type="similarity">
    <text evidence="1">Belongs to the ABC transporter superfamily. Molybdate importer (TC 3.A.1.8) family.</text>
</comment>
<reference key="1">
    <citation type="journal article" date="2004" name="Proc. Natl. Acad. Sci. U.S.A.">
        <title>Insights into the evolution of Yersinia pestis through whole-genome comparison with Yersinia pseudotuberculosis.</title>
        <authorList>
            <person name="Chain P.S.G."/>
            <person name="Carniel E."/>
            <person name="Larimer F.W."/>
            <person name="Lamerdin J."/>
            <person name="Stoutland P.O."/>
            <person name="Regala W.M."/>
            <person name="Georgescu A.M."/>
            <person name="Vergez L.M."/>
            <person name="Land M.L."/>
            <person name="Motin V.L."/>
            <person name="Brubaker R.R."/>
            <person name="Fowler J."/>
            <person name="Hinnebusch J."/>
            <person name="Marceau M."/>
            <person name="Medigue C."/>
            <person name="Simonet M."/>
            <person name="Chenal-Francisque V."/>
            <person name="Souza B."/>
            <person name="Dacheux D."/>
            <person name="Elliott J.M."/>
            <person name="Derbise A."/>
            <person name="Hauser L.J."/>
            <person name="Garcia E."/>
        </authorList>
    </citation>
    <scope>NUCLEOTIDE SEQUENCE [LARGE SCALE GENOMIC DNA]</scope>
    <source>
        <strain>IP32953</strain>
    </source>
</reference>
<organism>
    <name type="scientific">Yersinia pseudotuberculosis serotype I (strain IP32953)</name>
    <dbReference type="NCBI Taxonomy" id="273123"/>
    <lineage>
        <taxon>Bacteria</taxon>
        <taxon>Pseudomonadati</taxon>
        <taxon>Pseudomonadota</taxon>
        <taxon>Gammaproteobacteria</taxon>
        <taxon>Enterobacterales</taxon>
        <taxon>Yersiniaceae</taxon>
        <taxon>Yersinia</taxon>
    </lineage>
</organism>
<feature type="chain" id="PRO_0000092564" description="Molybdenum import ATP-binding protein ModC">
    <location>
        <begin position="1"/>
        <end position="359"/>
    </location>
</feature>
<feature type="domain" description="ABC transporter" evidence="1">
    <location>
        <begin position="1"/>
        <end position="229"/>
    </location>
</feature>
<feature type="domain" description="Mop" evidence="2">
    <location>
        <begin position="289"/>
        <end position="354"/>
    </location>
</feature>
<feature type="binding site" evidence="1">
    <location>
        <begin position="31"/>
        <end position="38"/>
    </location>
    <ligand>
        <name>ATP</name>
        <dbReference type="ChEBI" id="CHEBI:30616"/>
    </ligand>
</feature>
<protein>
    <recommendedName>
        <fullName evidence="1">Molybdenum import ATP-binding protein ModC</fullName>
        <ecNumber evidence="1">7.3.2.5</ecNumber>
    </recommendedName>
</protein>
<gene>
    <name evidence="1" type="primary">modC</name>
    <name type="ordered locus">YPTB1178</name>
</gene>
<keyword id="KW-0067">ATP-binding</keyword>
<keyword id="KW-0997">Cell inner membrane</keyword>
<keyword id="KW-1003">Cell membrane</keyword>
<keyword id="KW-0472">Membrane</keyword>
<keyword id="KW-0500">Molybdenum</keyword>
<keyword id="KW-0547">Nucleotide-binding</keyword>
<keyword id="KW-1278">Translocase</keyword>
<keyword id="KW-0813">Transport</keyword>
<dbReference type="EC" id="7.3.2.5" evidence="1"/>
<dbReference type="EMBL" id="BX936398">
    <property type="protein sequence ID" value="CAH20418.1"/>
    <property type="molecule type" value="Genomic_DNA"/>
</dbReference>
<dbReference type="RefSeq" id="WP_011191953.1">
    <property type="nucleotide sequence ID" value="NC_006155.1"/>
</dbReference>
<dbReference type="SMR" id="Q66D71"/>
<dbReference type="KEGG" id="ypo:BZ17_1350"/>
<dbReference type="KEGG" id="yps:YPTB1178"/>
<dbReference type="PATRIC" id="fig|273123.14.peg.1441"/>
<dbReference type="Proteomes" id="UP000001011">
    <property type="component" value="Chromosome"/>
</dbReference>
<dbReference type="GO" id="GO:0005886">
    <property type="term" value="C:plasma membrane"/>
    <property type="evidence" value="ECO:0007669"/>
    <property type="project" value="UniProtKB-SubCell"/>
</dbReference>
<dbReference type="GO" id="GO:0015412">
    <property type="term" value="F:ABC-type molybdate transporter activity"/>
    <property type="evidence" value="ECO:0007669"/>
    <property type="project" value="UniProtKB-EC"/>
</dbReference>
<dbReference type="GO" id="GO:0005524">
    <property type="term" value="F:ATP binding"/>
    <property type="evidence" value="ECO:0007669"/>
    <property type="project" value="UniProtKB-KW"/>
</dbReference>
<dbReference type="GO" id="GO:0016887">
    <property type="term" value="F:ATP hydrolysis activity"/>
    <property type="evidence" value="ECO:0007669"/>
    <property type="project" value="InterPro"/>
</dbReference>
<dbReference type="FunFam" id="3.40.50.300:FF:000634">
    <property type="entry name" value="Molybdenum import ATP-binding protein ModC"/>
    <property type="match status" value="1"/>
</dbReference>
<dbReference type="Gene3D" id="2.40.50.100">
    <property type="match status" value="1"/>
</dbReference>
<dbReference type="Gene3D" id="3.40.50.300">
    <property type="entry name" value="P-loop containing nucleotide triphosphate hydrolases"/>
    <property type="match status" value="1"/>
</dbReference>
<dbReference type="InterPro" id="IPR003593">
    <property type="entry name" value="AAA+_ATPase"/>
</dbReference>
<dbReference type="InterPro" id="IPR003439">
    <property type="entry name" value="ABC_transporter-like_ATP-bd"/>
</dbReference>
<dbReference type="InterPro" id="IPR017871">
    <property type="entry name" value="ABC_transporter-like_CS"/>
</dbReference>
<dbReference type="InterPro" id="IPR008995">
    <property type="entry name" value="Mo/tungstate-bd_C_term_dom"/>
</dbReference>
<dbReference type="InterPro" id="IPR011868">
    <property type="entry name" value="ModC_ABC_ATP-bd"/>
</dbReference>
<dbReference type="InterPro" id="IPR050334">
    <property type="entry name" value="Molybdenum_import_ModC"/>
</dbReference>
<dbReference type="InterPro" id="IPR004606">
    <property type="entry name" value="Mop_domain"/>
</dbReference>
<dbReference type="InterPro" id="IPR027417">
    <property type="entry name" value="P-loop_NTPase"/>
</dbReference>
<dbReference type="InterPro" id="IPR005116">
    <property type="entry name" value="Transp-assoc_OB_typ1"/>
</dbReference>
<dbReference type="NCBIfam" id="TIGR02142">
    <property type="entry name" value="modC_ABC"/>
    <property type="match status" value="1"/>
</dbReference>
<dbReference type="NCBIfam" id="TIGR00638">
    <property type="entry name" value="Mop"/>
    <property type="match status" value="1"/>
</dbReference>
<dbReference type="NCBIfam" id="NF008355">
    <property type="entry name" value="PRK11144.1"/>
    <property type="match status" value="1"/>
</dbReference>
<dbReference type="PANTHER" id="PTHR43514">
    <property type="entry name" value="ABC TRANSPORTER I FAMILY MEMBER 10"/>
    <property type="match status" value="1"/>
</dbReference>
<dbReference type="PANTHER" id="PTHR43514:SF4">
    <property type="entry name" value="ABC TRANSPORTER I FAMILY MEMBER 10"/>
    <property type="match status" value="1"/>
</dbReference>
<dbReference type="Pfam" id="PF00005">
    <property type="entry name" value="ABC_tran"/>
    <property type="match status" value="1"/>
</dbReference>
<dbReference type="Pfam" id="PF03459">
    <property type="entry name" value="TOBE"/>
    <property type="match status" value="1"/>
</dbReference>
<dbReference type="SMART" id="SM00382">
    <property type="entry name" value="AAA"/>
    <property type="match status" value="1"/>
</dbReference>
<dbReference type="SUPFAM" id="SSF50331">
    <property type="entry name" value="MOP-like"/>
    <property type="match status" value="1"/>
</dbReference>
<dbReference type="SUPFAM" id="SSF52540">
    <property type="entry name" value="P-loop containing nucleoside triphosphate hydrolases"/>
    <property type="match status" value="1"/>
</dbReference>
<dbReference type="PROSITE" id="PS00211">
    <property type="entry name" value="ABC_TRANSPORTER_1"/>
    <property type="match status" value="1"/>
</dbReference>
<dbReference type="PROSITE" id="PS50893">
    <property type="entry name" value="ABC_TRANSPORTER_2"/>
    <property type="match status" value="1"/>
</dbReference>
<dbReference type="PROSITE" id="PS51241">
    <property type="entry name" value="MODC"/>
    <property type="match status" value="1"/>
</dbReference>
<dbReference type="PROSITE" id="PS51866">
    <property type="entry name" value="MOP"/>
    <property type="match status" value="1"/>
</dbReference>
<proteinExistence type="inferred from homology"/>
<evidence type="ECO:0000255" key="1">
    <source>
        <dbReference type="HAMAP-Rule" id="MF_01705"/>
    </source>
</evidence>
<evidence type="ECO:0000255" key="2">
    <source>
        <dbReference type="PROSITE-ProRule" id="PRU01213"/>
    </source>
</evidence>
<accession>Q66D71</accession>